<protein>
    <recommendedName>
        <fullName evidence="1">Ribosomal RNA large subunit methyltransferase F</fullName>
        <ecNumber evidence="1">2.1.1.181</ecNumber>
    </recommendedName>
    <alternativeName>
        <fullName evidence="1">23S rRNA mA1618 methyltransferase</fullName>
    </alternativeName>
    <alternativeName>
        <fullName evidence="1">rRNA adenine N-6-methyltransferase</fullName>
    </alternativeName>
</protein>
<reference key="1">
    <citation type="submission" date="2008-01" db="EMBL/GenBank/DDBJ databases">
        <title>Complete sequence of Shewanella halifaxensis HAW-EB4.</title>
        <authorList>
            <consortium name="US DOE Joint Genome Institute"/>
            <person name="Copeland A."/>
            <person name="Lucas S."/>
            <person name="Lapidus A."/>
            <person name="Glavina del Rio T."/>
            <person name="Dalin E."/>
            <person name="Tice H."/>
            <person name="Bruce D."/>
            <person name="Goodwin L."/>
            <person name="Pitluck S."/>
            <person name="Sims D."/>
            <person name="Brettin T."/>
            <person name="Detter J.C."/>
            <person name="Han C."/>
            <person name="Kuske C.R."/>
            <person name="Schmutz J."/>
            <person name="Larimer F."/>
            <person name="Land M."/>
            <person name="Hauser L."/>
            <person name="Kyrpides N."/>
            <person name="Kim E."/>
            <person name="Zhao J.-S."/>
            <person name="Richardson P."/>
        </authorList>
    </citation>
    <scope>NUCLEOTIDE SEQUENCE [LARGE SCALE GENOMIC DNA]</scope>
    <source>
        <strain>HAW-EB4</strain>
    </source>
</reference>
<evidence type="ECO:0000255" key="1">
    <source>
        <dbReference type="HAMAP-Rule" id="MF_01848"/>
    </source>
</evidence>
<evidence type="ECO:0000256" key="2">
    <source>
        <dbReference type="SAM" id="MobiDB-lite"/>
    </source>
</evidence>
<feature type="chain" id="PRO_0000349956" description="Ribosomal RNA large subunit methyltransferase F">
    <location>
        <begin position="1"/>
        <end position="380"/>
    </location>
</feature>
<feature type="region of interest" description="Disordered" evidence="2">
    <location>
        <begin position="1"/>
        <end position="32"/>
    </location>
</feature>
<organism>
    <name type="scientific">Shewanella halifaxensis (strain HAW-EB4)</name>
    <dbReference type="NCBI Taxonomy" id="458817"/>
    <lineage>
        <taxon>Bacteria</taxon>
        <taxon>Pseudomonadati</taxon>
        <taxon>Pseudomonadota</taxon>
        <taxon>Gammaproteobacteria</taxon>
        <taxon>Alteromonadales</taxon>
        <taxon>Shewanellaceae</taxon>
        <taxon>Shewanella</taxon>
    </lineage>
</organism>
<sequence>MSHKTKPSTQERKAGKPSAPKRKVISKSPNSKLKTIVKGQKNTAVKAQTSKPLHPRNVHNKGYDFPALIAAFAALKSFVKPNPYGNLSIDFADPQAVKMLNAALLKLHYDVEHWDIPAGFLCPPIPGRADYIHYVADLLAVKKSSKKRVPKGPRVKVLDIGTGANVIYPLLGIQSYGWSFVGSDVDPLSIANAQQVFASNPAIAARFNSRLQTNAKHVFHGVIEPNERFDITLCNPPFHASLAEASEGTARKLKNLAANRAKSSEAKPLRSTKPVVTKTETPLNFGGQKAELWCEGGELQFLQTMISESHEFASQCLWFTTLVSKKENLKPAKALLAKVKAEEVKEMEMHQGNKITRVLAWTFLKPEQRELWAQYRDVEN</sequence>
<comment type="function">
    <text evidence="1">Specifically methylates the adenine in position 1618 of 23S rRNA.</text>
</comment>
<comment type="catalytic activity">
    <reaction evidence="1">
        <text>adenosine(1618) in 23S rRNA + S-adenosyl-L-methionine = N(6)-methyladenosine(1618) in 23S rRNA + S-adenosyl-L-homocysteine + H(+)</text>
        <dbReference type="Rhea" id="RHEA:16497"/>
        <dbReference type="Rhea" id="RHEA-COMP:10229"/>
        <dbReference type="Rhea" id="RHEA-COMP:10231"/>
        <dbReference type="ChEBI" id="CHEBI:15378"/>
        <dbReference type="ChEBI" id="CHEBI:57856"/>
        <dbReference type="ChEBI" id="CHEBI:59789"/>
        <dbReference type="ChEBI" id="CHEBI:74411"/>
        <dbReference type="ChEBI" id="CHEBI:74449"/>
        <dbReference type="EC" id="2.1.1.181"/>
    </reaction>
</comment>
<comment type="subcellular location">
    <subcellularLocation>
        <location evidence="1">Cytoplasm</location>
    </subcellularLocation>
</comment>
<comment type="similarity">
    <text evidence="1">Belongs to the methyltransferase superfamily. METTL16/RlmF family.</text>
</comment>
<gene>
    <name evidence="1" type="primary">rlmF</name>
    <name type="ordered locus">Shal_0097</name>
</gene>
<keyword id="KW-0963">Cytoplasm</keyword>
<keyword id="KW-0489">Methyltransferase</keyword>
<keyword id="KW-0698">rRNA processing</keyword>
<keyword id="KW-0949">S-adenosyl-L-methionine</keyword>
<keyword id="KW-0808">Transferase</keyword>
<accession>B0TM80</accession>
<proteinExistence type="inferred from homology"/>
<name>RLMF_SHEHH</name>
<dbReference type="EC" id="2.1.1.181" evidence="1"/>
<dbReference type="EMBL" id="CP000931">
    <property type="protein sequence ID" value="ABZ74673.1"/>
    <property type="molecule type" value="Genomic_DNA"/>
</dbReference>
<dbReference type="RefSeq" id="WP_012275230.1">
    <property type="nucleotide sequence ID" value="NC_010334.1"/>
</dbReference>
<dbReference type="SMR" id="B0TM80"/>
<dbReference type="STRING" id="458817.Shal_0097"/>
<dbReference type="KEGG" id="shl:Shal_0097"/>
<dbReference type="eggNOG" id="COG3129">
    <property type="taxonomic scope" value="Bacteria"/>
</dbReference>
<dbReference type="HOGENOM" id="CLU_027534_3_0_6"/>
<dbReference type="OrthoDB" id="1115728at2"/>
<dbReference type="Proteomes" id="UP000001317">
    <property type="component" value="Chromosome"/>
</dbReference>
<dbReference type="GO" id="GO:0005737">
    <property type="term" value="C:cytoplasm"/>
    <property type="evidence" value="ECO:0007669"/>
    <property type="project" value="UniProtKB-SubCell"/>
</dbReference>
<dbReference type="GO" id="GO:0052907">
    <property type="term" value="F:23S rRNA (adenine(1618)-N(6))-methyltransferase activity"/>
    <property type="evidence" value="ECO:0007669"/>
    <property type="project" value="UniProtKB-EC"/>
</dbReference>
<dbReference type="GO" id="GO:0070475">
    <property type="term" value="P:rRNA base methylation"/>
    <property type="evidence" value="ECO:0007669"/>
    <property type="project" value="TreeGrafter"/>
</dbReference>
<dbReference type="CDD" id="cd02440">
    <property type="entry name" value="AdoMet_MTases"/>
    <property type="match status" value="1"/>
</dbReference>
<dbReference type="Gene3D" id="3.40.50.150">
    <property type="entry name" value="Vaccinia Virus protein VP39"/>
    <property type="match status" value="1"/>
</dbReference>
<dbReference type="HAMAP" id="MF_01848">
    <property type="entry name" value="23SrRNA_methyltr_F"/>
    <property type="match status" value="1"/>
</dbReference>
<dbReference type="InterPro" id="IPR010286">
    <property type="entry name" value="METTL16/RlmF"/>
</dbReference>
<dbReference type="InterPro" id="IPR016909">
    <property type="entry name" value="rRNA_lsu_MeTfrase_F"/>
</dbReference>
<dbReference type="InterPro" id="IPR029063">
    <property type="entry name" value="SAM-dependent_MTases_sf"/>
</dbReference>
<dbReference type="NCBIfam" id="NF008725">
    <property type="entry name" value="PRK11727.1"/>
    <property type="match status" value="1"/>
</dbReference>
<dbReference type="PANTHER" id="PTHR13393:SF0">
    <property type="entry name" value="RNA N6-ADENOSINE-METHYLTRANSFERASE METTL16"/>
    <property type="match status" value="1"/>
</dbReference>
<dbReference type="PANTHER" id="PTHR13393">
    <property type="entry name" value="SAM-DEPENDENT METHYLTRANSFERASE"/>
    <property type="match status" value="1"/>
</dbReference>
<dbReference type="Pfam" id="PF05971">
    <property type="entry name" value="Methyltransf_10"/>
    <property type="match status" value="1"/>
</dbReference>
<dbReference type="PIRSF" id="PIRSF029038">
    <property type="entry name" value="Mtase_YbiN_prd"/>
    <property type="match status" value="1"/>
</dbReference>
<dbReference type="SUPFAM" id="SSF53335">
    <property type="entry name" value="S-adenosyl-L-methionine-dependent methyltransferases"/>
    <property type="match status" value="1"/>
</dbReference>